<keyword id="KW-0025">Alternative splicing</keyword>
<keyword id="KW-0256">Endoplasmic reticulum</keyword>
<keyword id="KW-0472">Membrane</keyword>
<keyword id="KW-0653">Protein transport</keyword>
<keyword id="KW-1267">Proteomics identification</keyword>
<keyword id="KW-1185">Reference proteome</keyword>
<keyword id="KW-0811">Translocation</keyword>
<keyword id="KW-0812">Transmembrane</keyword>
<keyword id="KW-1133">Transmembrane helix</keyword>
<keyword id="KW-0813">Transport</keyword>
<evidence type="ECO:0000250" key="1">
    <source>
        <dbReference type="UniProtKB" id="P38377"/>
    </source>
</evidence>
<evidence type="ECO:0000250" key="2">
    <source>
        <dbReference type="UniProtKB" id="P61619"/>
    </source>
</evidence>
<evidence type="ECO:0000255" key="3"/>
<evidence type="ECO:0000303" key="4">
    <source>
    </source>
</evidence>
<evidence type="ECO:0000305" key="5"/>
<gene>
    <name type="primary">SEC61A2</name>
</gene>
<comment type="function">
    <text evidence="2">Component of SEC61 channel-forming translocon complex that mediates transport of signal peptide-containing precursor polypeptides across the endoplasmic reticulum (ER). Forms a ribosome receptor and a gated pore in the ER membrane, both functions required for cotranslational translocation of nascent polypeptides.</text>
</comment>
<comment type="subunit">
    <text evidence="1">The SEC61 channel-forming translocon complex consists of channel-forming core components SEC61A1, SEC61B and SEC61G and different auxiliary components such as SEC62 and SEC63.</text>
</comment>
<comment type="interaction">
    <interactant intactId="EBI-1172006">
        <id>Q9H9S3</id>
    </interactant>
    <interactant intactId="EBI-1788819">
        <id>P60468</id>
        <label>SEC61B</label>
    </interactant>
    <organismsDiffer>false</organismsDiffer>
    <experiments>2</experiments>
</comment>
<comment type="subcellular location">
    <subcellularLocation>
        <location evidence="2">Endoplasmic reticulum membrane</location>
        <topology evidence="3">Multi-pass membrane protein</topology>
    </subcellularLocation>
</comment>
<comment type="alternative products">
    <event type="alternative splicing"/>
    <isoform>
        <id>Q9H9S3-1</id>
        <name>1</name>
        <sequence type="displayed"/>
    </isoform>
    <isoform>
        <id>Q9H9S3-2</id>
        <name>2</name>
        <sequence type="described" ref="VSP_010472"/>
    </isoform>
    <isoform>
        <id>Q9H9S3-3</id>
        <name>3</name>
        <sequence type="described" ref="VSP_046380"/>
    </isoform>
</comment>
<comment type="similarity">
    <text evidence="5">Belongs to the SecY/SEC61-alpha family.</text>
</comment>
<accession>Q9H9S3</accession>
<accession>A8K8D0</accession>
<accession>B4DX72</accession>
<accession>F8W773</accession>
<dbReference type="EMBL" id="AF346603">
    <property type="protein sequence ID" value="AAK29084.1"/>
    <property type="molecule type" value="mRNA"/>
</dbReference>
<dbReference type="EMBL" id="AK022640">
    <property type="protein sequence ID" value="BAB14148.1"/>
    <property type="molecule type" value="mRNA"/>
</dbReference>
<dbReference type="EMBL" id="AK292295">
    <property type="protein sequence ID" value="BAF84984.1"/>
    <property type="molecule type" value="mRNA"/>
</dbReference>
<dbReference type="EMBL" id="AK301841">
    <property type="protein sequence ID" value="BAG63284.1"/>
    <property type="molecule type" value="mRNA"/>
</dbReference>
<dbReference type="EMBL" id="AC073160">
    <property type="status" value="NOT_ANNOTATED_CDS"/>
    <property type="molecule type" value="Genomic_DNA"/>
</dbReference>
<dbReference type="EMBL" id="CH471072">
    <property type="protein sequence ID" value="EAW86324.1"/>
    <property type="molecule type" value="Genomic_DNA"/>
</dbReference>
<dbReference type="CCDS" id="CCDS44358.1">
    <molecule id="Q9H9S3-2"/>
</dbReference>
<dbReference type="CCDS" id="CCDS44359.1">
    <molecule id="Q9H9S3-3"/>
</dbReference>
<dbReference type="CCDS" id="CCDS7088.1">
    <molecule id="Q9H9S3-1"/>
</dbReference>
<dbReference type="RefSeq" id="NP_001136099.1">
    <molecule id="Q9H9S3-2"/>
    <property type="nucleotide sequence ID" value="NM_001142627.3"/>
</dbReference>
<dbReference type="RefSeq" id="NP_001136100.1">
    <molecule id="Q9H9S3-3"/>
    <property type="nucleotide sequence ID" value="NM_001142628.1"/>
</dbReference>
<dbReference type="RefSeq" id="NP_060614.2">
    <molecule id="Q9H9S3-1"/>
    <property type="nucleotide sequence ID" value="NM_018144.3"/>
</dbReference>
<dbReference type="SMR" id="Q9H9S3"/>
<dbReference type="BioGRID" id="120475">
    <property type="interactions" value="51"/>
</dbReference>
<dbReference type="ComplexPortal" id="CPX-8169">
    <property type="entry name" value="SEC61 protein-conducting channel complex, SEC1A2 variant"/>
</dbReference>
<dbReference type="FunCoup" id="Q9H9S3">
    <property type="interactions" value="1124"/>
</dbReference>
<dbReference type="IntAct" id="Q9H9S3">
    <property type="interactions" value="24"/>
</dbReference>
<dbReference type="STRING" id="9606.ENSP00000298428"/>
<dbReference type="TCDB" id="3.A.5.9.1">
    <property type="family name" value="the general secretory pathway (sec) family"/>
</dbReference>
<dbReference type="iPTMnet" id="Q9H9S3"/>
<dbReference type="PhosphoSitePlus" id="Q9H9S3"/>
<dbReference type="SwissPalm" id="Q9H9S3"/>
<dbReference type="BioMuta" id="SEC61A2"/>
<dbReference type="DMDM" id="48477069"/>
<dbReference type="jPOST" id="Q9H9S3"/>
<dbReference type="MassIVE" id="Q9H9S3"/>
<dbReference type="PaxDb" id="9606-ENSP00000298428"/>
<dbReference type="PeptideAtlas" id="Q9H9S3"/>
<dbReference type="ProteomicsDB" id="29899"/>
<dbReference type="ProteomicsDB" id="81357">
    <molecule id="Q9H9S3-1"/>
</dbReference>
<dbReference type="ProteomicsDB" id="81358">
    <molecule id="Q9H9S3-2"/>
</dbReference>
<dbReference type="Pumba" id="Q9H9S3"/>
<dbReference type="Antibodypedia" id="71451">
    <property type="antibodies" value="12 antibodies from 9 providers"/>
</dbReference>
<dbReference type="DNASU" id="55176"/>
<dbReference type="Ensembl" id="ENST00000298428.14">
    <molecule id="Q9H9S3-1"/>
    <property type="protein sequence ID" value="ENSP00000298428.9"/>
    <property type="gene ID" value="ENSG00000065665.21"/>
</dbReference>
<dbReference type="Ensembl" id="ENST00000304267.12">
    <molecule id="Q9H9S3-2"/>
    <property type="protein sequence ID" value="ENSP00000302048.8"/>
    <property type="gene ID" value="ENSG00000065665.21"/>
</dbReference>
<dbReference type="Ensembl" id="ENST00000379033.7">
    <molecule id="Q9H9S3-3"/>
    <property type="protein sequence ID" value="ENSP00000368319.3"/>
    <property type="gene ID" value="ENSG00000065665.21"/>
</dbReference>
<dbReference type="GeneID" id="55176"/>
<dbReference type="KEGG" id="hsa:55176"/>
<dbReference type="MANE-Select" id="ENST00000298428.14">
    <property type="protein sequence ID" value="ENSP00000298428.9"/>
    <property type="RefSeq nucleotide sequence ID" value="NM_018144.4"/>
    <property type="RefSeq protein sequence ID" value="NP_060614.2"/>
</dbReference>
<dbReference type="UCSC" id="uc001ile.3">
    <molecule id="Q9H9S3-1"/>
    <property type="organism name" value="human"/>
</dbReference>
<dbReference type="AGR" id="HGNC:17702"/>
<dbReference type="CTD" id="55176"/>
<dbReference type="DisGeNET" id="55176"/>
<dbReference type="GeneCards" id="SEC61A2"/>
<dbReference type="HGNC" id="HGNC:17702">
    <property type="gene designation" value="SEC61A2"/>
</dbReference>
<dbReference type="HPA" id="ENSG00000065665">
    <property type="expression patterns" value="Tissue enhanced (brain)"/>
</dbReference>
<dbReference type="MIM" id="618271">
    <property type="type" value="gene"/>
</dbReference>
<dbReference type="neXtProt" id="NX_Q9H9S3"/>
<dbReference type="OpenTargets" id="ENSG00000065665"/>
<dbReference type="PharmGKB" id="PA134861382"/>
<dbReference type="VEuPathDB" id="HostDB:ENSG00000065665"/>
<dbReference type="eggNOG" id="KOG1373">
    <property type="taxonomic scope" value="Eukaryota"/>
</dbReference>
<dbReference type="GeneTree" id="ENSGT00390000003721"/>
<dbReference type="HOGENOM" id="CLU_031763_2_0_1"/>
<dbReference type="InParanoid" id="Q9H9S3"/>
<dbReference type="OMA" id="XLFVAGL"/>
<dbReference type="OrthoDB" id="420669at2759"/>
<dbReference type="PAN-GO" id="Q9H9S3">
    <property type="GO annotations" value="6 GO annotations based on evolutionary models"/>
</dbReference>
<dbReference type="PhylomeDB" id="Q9H9S3"/>
<dbReference type="TreeFam" id="TF300348"/>
<dbReference type="PathwayCommons" id="Q9H9S3"/>
<dbReference type="Reactome" id="R-HSA-1236974">
    <property type="pathway name" value="ER-Phagosome pathway"/>
</dbReference>
<dbReference type="Reactome" id="R-HSA-1799339">
    <property type="pathway name" value="SRP-dependent cotranslational protein targeting to membrane"/>
</dbReference>
<dbReference type="SignaLink" id="Q9H9S3"/>
<dbReference type="SIGNOR" id="Q9H9S3"/>
<dbReference type="BioGRID-ORCS" id="55176">
    <property type="hits" value="13 hits in 1156 CRISPR screens"/>
</dbReference>
<dbReference type="ChiTaRS" id="SEC61A2">
    <property type="organism name" value="human"/>
</dbReference>
<dbReference type="GenomeRNAi" id="55176"/>
<dbReference type="Pharos" id="Q9H9S3">
    <property type="development level" value="Tdark"/>
</dbReference>
<dbReference type="PRO" id="PR:Q9H9S3"/>
<dbReference type="Proteomes" id="UP000005640">
    <property type="component" value="Chromosome 10"/>
</dbReference>
<dbReference type="RNAct" id="Q9H9S3">
    <property type="molecule type" value="protein"/>
</dbReference>
<dbReference type="Bgee" id="ENSG00000065665">
    <property type="expression patterns" value="Expressed in cortical plate and 136 other cell types or tissues"/>
</dbReference>
<dbReference type="ExpressionAtlas" id="Q9H9S3">
    <property type="expression patterns" value="baseline and differential"/>
</dbReference>
<dbReference type="GO" id="GO:0005784">
    <property type="term" value="C:Sec61 translocon complex"/>
    <property type="evidence" value="ECO:0000318"/>
    <property type="project" value="GO_Central"/>
</dbReference>
<dbReference type="GO" id="GO:0008320">
    <property type="term" value="F:protein transmembrane transporter activity"/>
    <property type="evidence" value="ECO:0000318"/>
    <property type="project" value="GO_Central"/>
</dbReference>
<dbReference type="GO" id="GO:0043022">
    <property type="term" value="F:ribosome binding"/>
    <property type="evidence" value="ECO:0000318"/>
    <property type="project" value="GO_Central"/>
</dbReference>
<dbReference type="GO" id="GO:0005048">
    <property type="term" value="F:signal sequence binding"/>
    <property type="evidence" value="ECO:0000318"/>
    <property type="project" value="GO_Central"/>
</dbReference>
<dbReference type="GO" id="GO:0031204">
    <property type="term" value="P:post-translational protein targeting to membrane, translocation"/>
    <property type="evidence" value="ECO:0000318"/>
    <property type="project" value="GO_Central"/>
</dbReference>
<dbReference type="GO" id="GO:0006616">
    <property type="term" value="P:SRP-dependent cotranslational protein targeting to membrane, translocation"/>
    <property type="evidence" value="ECO:0000318"/>
    <property type="project" value="GO_Central"/>
</dbReference>
<dbReference type="FunFam" id="1.10.3370.10:FF:000002">
    <property type="entry name" value="Transport Sec61 subunit alpha isoform 2"/>
    <property type="match status" value="1"/>
</dbReference>
<dbReference type="Gene3D" id="1.10.3370.10">
    <property type="entry name" value="SecY subunit domain"/>
    <property type="match status" value="1"/>
</dbReference>
<dbReference type="InterPro" id="IPR002208">
    <property type="entry name" value="SecY/SEC61-alpha"/>
</dbReference>
<dbReference type="InterPro" id="IPR030659">
    <property type="entry name" value="SecY_CS"/>
</dbReference>
<dbReference type="InterPro" id="IPR023201">
    <property type="entry name" value="SecY_dom_sf"/>
</dbReference>
<dbReference type="InterPro" id="IPR019561">
    <property type="entry name" value="Translocon_Sec61/SecY_plug_dom"/>
</dbReference>
<dbReference type="NCBIfam" id="TIGR00967">
    <property type="entry name" value="3a0501s007"/>
    <property type="match status" value="1"/>
</dbReference>
<dbReference type="NCBIfam" id="NF006341">
    <property type="entry name" value="PRK08568.1-5"/>
    <property type="match status" value="1"/>
</dbReference>
<dbReference type="PANTHER" id="PTHR10906">
    <property type="entry name" value="SECY/SEC61-ALPHA FAMILY MEMBER"/>
    <property type="match status" value="1"/>
</dbReference>
<dbReference type="Pfam" id="PF10559">
    <property type="entry name" value="Plug_translocon"/>
    <property type="match status" value="1"/>
</dbReference>
<dbReference type="Pfam" id="PF00344">
    <property type="entry name" value="SecY"/>
    <property type="match status" value="1"/>
</dbReference>
<dbReference type="PIRSF" id="PIRSF004557">
    <property type="entry name" value="SecY"/>
    <property type="match status" value="1"/>
</dbReference>
<dbReference type="SUPFAM" id="SSF103491">
    <property type="entry name" value="Preprotein translocase SecY subunit"/>
    <property type="match status" value="1"/>
</dbReference>
<dbReference type="PROSITE" id="PS00755">
    <property type="entry name" value="SECY_1"/>
    <property type="match status" value="1"/>
</dbReference>
<dbReference type="PROSITE" id="PS00756">
    <property type="entry name" value="SECY_2"/>
    <property type="match status" value="1"/>
</dbReference>
<organism>
    <name type="scientific">Homo sapiens</name>
    <name type="common">Human</name>
    <dbReference type="NCBI Taxonomy" id="9606"/>
    <lineage>
        <taxon>Eukaryota</taxon>
        <taxon>Metazoa</taxon>
        <taxon>Chordata</taxon>
        <taxon>Craniata</taxon>
        <taxon>Vertebrata</taxon>
        <taxon>Euteleostomi</taxon>
        <taxon>Mammalia</taxon>
        <taxon>Eutheria</taxon>
        <taxon>Euarchontoglires</taxon>
        <taxon>Primates</taxon>
        <taxon>Haplorrhini</taxon>
        <taxon>Catarrhini</taxon>
        <taxon>Hominidae</taxon>
        <taxon>Homo</taxon>
    </lineage>
</organism>
<proteinExistence type="evidence at protein level"/>
<feature type="chain" id="PRO_0000131795" description="Protein transport protein Sec61 subunit alpha isoform 2">
    <location>
        <begin position="1"/>
        <end position="476"/>
    </location>
</feature>
<feature type="topological domain" description="Cytoplasmic" evidence="3">
    <location>
        <begin position="1"/>
        <end position="33"/>
    </location>
</feature>
<feature type="transmembrane region" description="Helical" evidence="3">
    <location>
        <begin position="34"/>
        <end position="53"/>
    </location>
</feature>
<feature type="topological domain" description="Lumenal" evidence="3">
    <location>
        <begin position="54"/>
        <end position="76"/>
    </location>
</feature>
<feature type="transmembrane region" description="Helical" evidence="3">
    <location>
        <begin position="77"/>
        <end position="96"/>
    </location>
</feature>
<feature type="topological domain" description="Cytoplasmic" evidence="3">
    <location>
        <begin position="97"/>
        <end position="117"/>
    </location>
</feature>
<feature type="transmembrane region" description="Helical" evidence="3">
    <location>
        <begin position="118"/>
        <end position="138"/>
    </location>
</feature>
<feature type="topological domain" description="Lumenal" evidence="3">
    <location>
        <begin position="139"/>
        <end position="144"/>
    </location>
</feature>
<feature type="transmembrane region" description="Helical" evidence="3">
    <location>
        <begin position="145"/>
        <end position="165"/>
    </location>
</feature>
<feature type="topological domain" description="Cytoplasmic" evidence="3">
    <location>
        <begin position="166"/>
        <end position="172"/>
    </location>
</feature>
<feature type="transmembrane region" description="Helical" evidence="3">
    <location>
        <begin position="173"/>
        <end position="193"/>
    </location>
</feature>
<feature type="topological domain" description="Lumenal" evidence="3">
    <location>
        <begin position="194"/>
        <end position="240"/>
    </location>
</feature>
<feature type="transmembrane region" description="Helical" evidence="3">
    <location>
        <begin position="241"/>
        <end position="261"/>
    </location>
</feature>
<feature type="topological domain" description="Cytoplasmic" evidence="3">
    <location>
        <begin position="262"/>
        <end position="288"/>
    </location>
</feature>
<feature type="transmembrane region" description="Helical" evidence="3">
    <location>
        <begin position="289"/>
        <end position="309"/>
    </location>
</feature>
<feature type="topological domain" description="Lumenal" evidence="3">
    <location>
        <begin position="310"/>
        <end position="354"/>
    </location>
</feature>
<feature type="transmembrane region" description="Helical" evidence="3">
    <location>
        <begin position="355"/>
        <end position="375"/>
    </location>
</feature>
<feature type="topological domain" description="Cytoplasmic" evidence="3">
    <location>
        <begin position="376"/>
        <end position="420"/>
    </location>
</feature>
<feature type="transmembrane region" description="Helical" evidence="3">
    <location>
        <begin position="421"/>
        <end position="441"/>
    </location>
</feature>
<feature type="topological domain" description="Lumenal" evidence="3">
    <location>
        <begin position="442"/>
        <end position="445"/>
    </location>
</feature>
<feature type="transmembrane region" description="Helical" evidence="3">
    <location>
        <begin position="446"/>
        <end position="462"/>
    </location>
</feature>
<feature type="topological domain" description="Cytoplasmic" evidence="3">
    <location>
        <begin position="463"/>
        <end position="476"/>
    </location>
</feature>
<feature type="splice variant" id="VSP_046380" description="In isoform 3." evidence="4">
    <location>
        <begin position="26"/>
        <end position="47"/>
    </location>
</feature>
<feature type="splice variant" id="VSP_010472" description="In isoform 2." evidence="4">
    <original>YIPTAAAFGGLCIGALSVLADFLGAIGSGTGILLAVTIIYQYFEIFVKEQAEVGGMGALFF</original>
    <variation>PKVKLRRWKGEGRHFTKRILFY</variation>
    <location>
        <begin position="416"/>
        <end position="476"/>
    </location>
</feature>
<feature type="sequence conflict" description="In Ref. 2; BAB14148." evidence="5" ref="2">
    <original>L</original>
    <variation>P</variation>
    <location>
        <position position="16"/>
    </location>
</feature>
<feature type="sequence conflict" description="In Ref. 2; BAB14148." evidence="5" ref="2">
    <original>M</original>
    <variation>I</variation>
    <location>
        <position position="133"/>
    </location>
</feature>
<feature type="sequence conflict" description="In Ref. 2; BAG63284." evidence="5" ref="2">
    <original>G</original>
    <variation>E</variation>
    <location>
        <position position="370"/>
    </location>
</feature>
<reference key="1">
    <citation type="submission" date="2001-02" db="EMBL/GenBank/DDBJ databases">
        <title>Sec61 alpha isoforms.</title>
        <authorList>
            <person name="Finke K."/>
            <person name="Prehn S."/>
            <person name="Hartmann E."/>
        </authorList>
    </citation>
    <scope>NUCLEOTIDE SEQUENCE [MRNA] (ISOFORM 1)</scope>
</reference>
<reference key="2">
    <citation type="journal article" date="2004" name="Nat. Genet.">
        <title>Complete sequencing and characterization of 21,243 full-length human cDNAs.</title>
        <authorList>
            <person name="Ota T."/>
            <person name="Suzuki Y."/>
            <person name="Nishikawa T."/>
            <person name="Otsuki T."/>
            <person name="Sugiyama T."/>
            <person name="Irie R."/>
            <person name="Wakamatsu A."/>
            <person name="Hayashi K."/>
            <person name="Sato H."/>
            <person name="Nagai K."/>
            <person name="Kimura K."/>
            <person name="Makita H."/>
            <person name="Sekine M."/>
            <person name="Obayashi M."/>
            <person name="Nishi T."/>
            <person name="Shibahara T."/>
            <person name="Tanaka T."/>
            <person name="Ishii S."/>
            <person name="Yamamoto J."/>
            <person name="Saito K."/>
            <person name="Kawai Y."/>
            <person name="Isono Y."/>
            <person name="Nakamura Y."/>
            <person name="Nagahari K."/>
            <person name="Murakami K."/>
            <person name="Yasuda T."/>
            <person name="Iwayanagi T."/>
            <person name="Wagatsuma M."/>
            <person name="Shiratori A."/>
            <person name="Sudo H."/>
            <person name="Hosoiri T."/>
            <person name="Kaku Y."/>
            <person name="Kodaira H."/>
            <person name="Kondo H."/>
            <person name="Sugawara M."/>
            <person name="Takahashi M."/>
            <person name="Kanda K."/>
            <person name="Yokoi T."/>
            <person name="Furuya T."/>
            <person name="Kikkawa E."/>
            <person name="Omura Y."/>
            <person name="Abe K."/>
            <person name="Kamihara K."/>
            <person name="Katsuta N."/>
            <person name="Sato K."/>
            <person name="Tanikawa M."/>
            <person name="Yamazaki M."/>
            <person name="Ninomiya K."/>
            <person name="Ishibashi T."/>
            <person name="Yamashita H."/>
            <person name="Murakawa K."/>
            <person name="Fujimori K."/>
            <person name="Tanai H."/>
            <person name="Kimata M."/>
            <person name="Watanabe M."/>
            <person name="Hiraoka S."/>
            <person name="Chiba Y."/>
            <person name="Ishida S."/>
            <person name="Ono Y."/>
            <person name="Takiguchi S."/>
            <person name="Watanabe S."/>
            <person name="Yosida M."/>
            <person name="Hotuta T."/>
            <person name="Kusano J."/>
            <person name="Kanehori K."/>
            <person name="Takahashi-Fujii A."/>
            <person name="Hara H."/>
            <person name="Tanase T.-O."/>
            <person name="Nomura Y."/>
            <person name="Togiya S."/>
            <person name="Komai F."/>
            <person name="Hara R."/>
            <person name="Takeuchi K."/>
            <person name="Arita M."/>
            <person name="Imose N."/>
            <person name="Musashino K."/>
            <person name="Yuuki H."/>
            <person name="Oshima A."/>
            <person name="Sasaki N."/>
            <person name="Aotsuka S."/>
            <person name="Yoshikawa Y."/>
            <person name="Matsunawa H."/>
            <person name="Ichihara T."/>
            <person name="Shiohata N."/>
            <person name="Sano S."/>
            <person name="Moriya S."/>
            <person name="Momiyama H."/>
            <person name="Satoh N."/>
            <person name="Takami S."/>
            <person name="Terashima Y."/>
            <person name="Suzuki O."/>
            <person name="Nakagawa S."/>
            <person name="Senoh A."/>
            <person name="Mizoguchi H."/>
            <person name="Goto Y."/>
            <person name="Shimizu F."/>
            <person name="Wakebe H."/>
            <person name="Hishigaki H."/>
            <person name="Watanabe T."/>
            <person name="Sugiyama A."/>
            <person name="Takemoto M."/>
            <person name="Kawakami B."/>
            <person name="Yamazaki M."/>
            <person name="Watanabe K."/>
            <person name="Kumagai A."/>
            <person name="Itakura S."/>
            <person name="Fukuzumi Y."/>
            <person name="Fujimori Y."/>
            <person name="Komiyama M."/>
            <person name="Tashiro H."/>
            <person name="Tanigami A."/>
            <person name="Fujiwara T."/>
            <person name="Ono T."/>
            <person name="Yamada K."/>
            <person name="Fujii Y."/>
            <person name="Ozaki K."/>
            <person name="Hirao M."/>
            <person name="Ohmori Y."/>
            <person name="Kawabata A."/>
            <person name="Hikiji T."/>
            <person name="Kobatake N."/>
            <person name="Inagaki H."/>
            <person name="Ikema Y."/>
            <person name="Okamoto S."/>
            <person name="Okitani R."/>
            <person name="Kawakami T."/>
            <person name="Noguchi S."/>
            <person name="Itoh T."/>
            <person name="Shigeta K."/>
            <person name="Senba T."/>
            <person name="Matsumura K."/>
            <person name="Nakajima Y."/>
            <person name="Mizuno T."/>
            <person name="Morinaga M."/>
            <person name="Sasaki M."/>
            <person name="Togashi T."/>
            <person name="Oyama M."/>
            <person name="Hata H."/>
            <person name="Watanabe M."/>
            <person name="Komatsu T."/>
            <person name="Mizushima-Sugano J."/>
            <person name="Satoh T."/>
            <person name="Shirai Y."/>
            <person name="Takahashi Y."/>
            <person name="Nakagawa K."/>
            <person name="Okumura K."/>
            <person name="Nagase T."/>
            <person name="Nomura N."/>
            <person name="Kikuchi H."/>
            <person name="Masuho Y."/>
            <person name="Yamashita R."/>
            <person name="Nakai K."/>
            <person name="Yada T."/>
            <person name="Nakamura Y."/>
            <person name="Ohara O."/>
            <person name="Isogai T."/>
            <person name="Sugano S."/>
        </authorList>
    </citation>
    <scope>NUCLEOTIDE SEQUENCE [LARGE SCALE MRNA] (ISOFORMS 1; 2 AND 3)</scope>
    <source>
        <tissue>Testis</tissue>
    </source>
</reference>
<reference key="3">
    <citation type="journal article" date="2004" name="Nature">
        <title>The DNA sequence and comparative analysis of human chromosome 10.</title>
        <authorList>
            <person name="Deloukas P."/>
            <person name="Earthrowl M.E."/>
            <person name="Grafham D.V."/>
            <person name="Rubenfield M."/>
            <person name="French L."/>
            <person name="Steward C.A."/>
            <person name="Sims S.K."/>
            <person name="Jones M.C."/>
            <person name="Searle S."/>
            <person name="Scott C."/>
            <person name="Howe K."/>
            <person name="Hunt S.E."/>
            <person name="Andrews T.D."/>
            <person name="Gilbert J.G.R."/>
            <person name="Swarbreck D."/>
            <person name="Ashurst J.L."/>
            <person name="Taylor A."/>
            <person name="Battles J."/>
            <person name="Bird C.P."/>
            <person name="Ainscough R."/>
            <person name="Almeida J.P."/>
            <person name="Ashwell R.I.S."/>
            <person name="Ambrose K.D."/>
            <person name="Babbage A.K."/>
            <person name="Bagguley C.L."/>
            <person name="Bailey J."/>
            <person name="Banerjee R."/>
            <person name="Bates K."/>
            <person name="Beasley H."/>
            <person name="Bray-Allen S."/>
            <person name="Brown A.J."/>
            <person name="Brown J.Y."/>
            <person name="Burford D.C."/>
            <person name="Burrill W."/>
            <person name="Burton J."/>
            <person name="Cahill P."/>
            <person name="Camire D."/>
            <person name="Carter N.P."/>
            <person name="Chapman J.C."/>
            <person name="Clark S.Y."/>
            <person name="Clarke G."/>
            <person name="Clee C.M."/>
            <person name="Clegg S."/>
            <person name="Corby N."/>
            <person name="Coulson A."/>
            <person name="Dhami P."/>
            <person name="Dutta I."/>
            <person name="Dunn M."/>
            <person name="Faulkner L."/>
            <person name="Frankish A."/>
            <person name="Frankland J.A."/>
            <person name="Garner P."/>
            <person name="Garnett J."/>
            <person name="Gribble S."/>
            <person name="Griffiths C."/>
            <person name="Grocock R."/>
            <person name="Gustafson E."/>
            <person name="Hammond S."/>
            <person name="Harley J.L."/>
            <person name="Hart E."/>
            <person name="Heath P.D."/>
            <person name="Ho T.P."/>
            <person name="Hopkins B."/>
            <person name="Horne J."/>
            <person name="Howden P.J."/>
            <person name="Huckle E."/>
            <person name="Hynds C."/>
            <person name="Johnson C."/>
            <person name="Johnson D."/>
            <person name="Kana A."/>
            <person name="Kay M."/>
            <person name="Kimberley A.M."/>
            <person name="Kershaw J.K."/>
            <person name="Kokkinaki M."/>
            <person name="Laird G.K."/>
            <person name="Lawlor S."/>
            <person name="Lee H.M."/>
            <person name="Leongamornlert D.A."/>
            <person name="Laird G."/>
            <person name="Lloyd C."/>
            <person name="Lloyd D.M."/>
            <person name="Loveland J."/>
            <person name="Lovell J."/>
            <person name="McLaren S."/>
            <person name="McLay K.E."/>
            <person name="McMurray A."/>
            <person name="Mashreghi-Mohammadi M."/>
            <person name="Matthews L."/>
            <person name="Milne S."/>
            <person name="Nickerson T."/>
            <person name="Nguyen M."/>
            <person name="Overton-Larty E."/>
            <person name="Palmer S.A."/>
            <person name="Pearce A.V."/>
            <person name="Peck A.I."/>
            <person name="Pelan S."/>
            <person name="Phillimore B."/>
            <person name="Porter K."/>
            <person name="Rice C.M."/>
            <person name="Rogosin A."/>
            <person name="Ross M.T."/>
            <person name="Sarafidou T."/>
            <person name="Sehra H.K."/>
            <person name="Shownkeen R."/>
            <person name="Skuce C.D."/>
            <person name="Smith M."/>
            <person name="Standring L."/>
            <person name="Sycamore N."/>
            <person name="Tester J."/>
            <person name="Thorpe A."/>
            <person name="Torcasso W."/>
            <person name="Tracey A."/>
            <person name="Tromans A."/>
            <person name="Tsolas J."/>
            <person name="Wall M."/>
            <person name="Walsh J."/>
            <person name="Wang H."/>
            <person name="Weinstock K."/>
            <person name="West A.P."/>
            <person name="Willey D.L."/>
            <person name="Whitehead S.L."/>
            <person name="Wilming L."/>
            <person name="Wray P.W."/>
            <person name="Young L."/>
            <person name="Chen Y."/>
            <person name="Lovering R.C."/>
            <person name="Moschonas N.K."/>
            <person name="Siebert R."/>
            <person name="Fechtel K."/>
            <person name="Bentley D."/>
            <person name="Durbin R.M."/>
            <person name="Hubbard T."/>
            <person name="Doucette-Stamm L."/>
            <person name="Beck S."/>
            <person name="Smith D.R."/>
            <person name="Rogers J."/>
        </authorList>
    </citation>
    <scope>NUCLEOTIDE SEQUENCE [LARGE SCALE GENOMIC DNA]</scope>
</reference>
<reference key="4">
    <citation type="submission" date="2005-09" db="EMBL/GenBank/DDBJ databases">
        <authorList>
            <person name="Mural R.J."/>
            <person name="Istrail S."/>
            <person name="Sutton G.G."/>
            <person name="Florea L."/>
            <person name="Halpern A.L."/>
            <person name="Mobarry C.M."/>
            <person name="Lippert R."/>
            <person name="Walenz B."/>
            <person name="Shatkay H."/>
            <person name="Dew I."/>
            <person name="Miller J.R."/>
            <person name="Flanigan M.J."/>
            <person name="Edwards N.J."/>
            <person name="Bolanos R."/>
            <person name="Fasulo D."/>
            <person name="Halldorsson B.V."/>
            <person name="Hannenhalli S."/>
            <person name="Turner R."/>
            <person name="Yooseph S."/>
            <person name="Lu F."/>
            <person name="Nusskern D.R."/>
            <person name="Shue B.C."/>
            <person name="Zheng X.H."/>
            <person name="Zhong F."/>
            <person name="Delcher A.L."/>
            <person name="Huson D.H."/>
            <person name="Kravitz S.A."/>
            <person name="Mouchard L."/>
            <person name="Reinert K."/>
            <person name="Remington K.A."/>
            <person name="Clark A.G."/>
            <person name="Waterman M.S."/>
            <person name="Eichler E.E."/>
            <person name="Adams M.D."/>
            <person name="Hunkapiller M.W."/>
            <person name="Myers E.W."/>
            <person name="Venter J.C."/>
        </authorList>
    </citation>
    <scope>NUCLEOTIDE SEQUENCE [LARGE SCALE GENOMIC DNA]</scope>
</reference>
<name>S61A2_HUMAN</name>
<sequence length="476" mass="52248">MGIKFLEVIKPFCAVLPEIQKPERKIQFREKVLWTAITLFIFLVCCQIPLFGIMSSDSADPFYWMRVILASNRGTLMELGISPIVTSGLIMQLLAGAKIIEVGDTPKDRALFNGAQKLFGMIITIGQAIVYVMTGMYGDPAEMGAGICLLIIIQLFVAGLIVLLLDELLQKGYGLGSGISLFIATNICETIVWKAFSPTTINTGRGTEFEGAVIALFHLLATRTDKVRALREAFYRQNLPNLMNLIATVFVFAVVIYFQGFRVDLPIKSARYRGQYSSYPIKLFYTSNIPIILQSALVSNLYVISQMLSVRFSGNFLVNLLGQWADVSGGGPARSYPVGGLCYYLSPPESMGAIFEDPVHVVVYIIFMLGSCAFFSKTWIEVSGSSAKDVAKQLKEQQMVMRGHRDTSMVHELNRYIPTAAAFGGLCIGALSVLADFLGAIGSGTGILLAVTIIYQYFEIFVKEQAEVGGMGALFF</sequence>
<protein>
    <recommendedName>
        <fullName>Protein transport protein Sec61 subunit alpha isoform 2</fullName>
        <shortName>Sec61 alpha-2</shortName>
    </recommendedName>
</protein>